<comment type="function">
    <text evidence="6">Acts in signal transduction. Negatively regulates the pak1/shk1 control pathway.</text>
</comment>
<comment type="subunit">
    <text evidence="6">Interacts with pak1/shk1.</text>
</comment>
<comment type="subcellular location">
    <subcellularLocation>
        <location evidence="6">Cytoplasm</location>
    </subcellularLocation>
    <text>Localizes to the cell ends during interphase and to the septum-forming region during cytokinesis.</text>
</comment>
<comment type="PTM">
    <text evidence="6 7">Phosphorylated by pak1/shk1.</text>
</comment>
<feature type="chain" id="PRO_0000097316" description="Rho-GTPase-activating protein 8">
    <location>
        <begin position="1"/>
        <end position="777"/>
    </location>
</feature>
<feature type="domain" description="F-BAR" evidence="4">
    <location>
        <begin position="3"/>
        <end position="420"/>
    </location>
</feature>
<feature type="domain" description="DEP" evidence="2">
    <location>
        <begin position="213"/>
        <end position="296"/>
    </location>
</feature>
<feature type="domain" description="Rho-GAP" evidence="3">
    <location>
        <begin position="454"/>
        <end position="650"/>
    </location>
</feature>
<feature type="region of interest" description="Disordered" evidence="5">
    <location>
        <begin position="667"/>
        <end position="709"/>
    </location>
</feature>
<feature type="coiled-coil region" evidence="1">
    <location>
        <begin position="117"/>
        <end position="172"/>
    </location>
</feature>
<feature type="compositionally biased region" description="Polar residues" evidence="5">
    <location>
        <begin position="668"/>
        <end position="692"/>
    </location>
</feature>
<feature type="site" description="Arginine finger; crucial for GTP hydrolysis by stabilizing the transition state" evidence="3">
    <location>
        <position position="496"/>
    </location>
</feature>
<feature type="modified residue" description="Phosphoserine" evidence="7">
    <location>
        <position position="676"/>
    </location>
</feature>
<feature type="modified residue" description="Phosphoserine" evidence="7">
    <location>
        <position position="680"/>
    </location>
</feature>
<feature type="modified residue" description="Phosphothreonine" evidence="7">
    <location>
        <position position="682"/>
    </location>
</feature>
<feature type="modified residue" description="Phosphoserine" evidence="7">
    <location>
        <position position="686"/>
    </location>
</feature>
<feature type="modified residue" description="Phosphothreonine" evidence="7">
    <location>
        <position position="694"/>
    </location>
</feature>
<feature type="modified residue" description="Phosphoserine" evidence="7">
    <location>
        <position position="698"/>
    </location>
</feature>
<protein>
    <recommendedName>
        <fullName>Rho-GTPase-activating protein 8</fullName>
    </recommendedName>
</protein>
<reference key="1">
    <citation type="journal article" date="2003" name="J. Biol. Chem.">
        <title>The novel Rho GTPase-activating protein family protein, Rga8, provides a potential link between Cdc42/p21-activated kinase and Rho signaling pathways in the fission yeast, Schizosaccharomyces pombe.</title>
        <authorList>
            <person name="Yang P."/>
            <person name="Qyang Y."/>
            <person name="Bartholomeusz G."/>
            <person name="Zhou X."/>
            <person name="Marcus S."/>
        </authorList>
    </citation>
    <scope>NUCLEOTIDE SEQUENCE [MRNA]</scope>
    <scope>FUNCTION</scope>
    <scope>INTERACTION WITH PAK1</scope>
    <scope>SUBCELLULAR LOCATION</scope>
    <scope>PHOSPHORYLATION</scope>
</reference>
<reference key="2">
    <citation type="journal article" date="2002" name="Nature">
        <title>The genome sequence of Schizosaccharomyces pombe.</title>
        <authorList>
            <person name="Wood V."/>
            <person name="Gwilliam R."/>
            <person name="Rajandream M.A."/>
            <person name="Lyne M.H."/>
            <person name="Lyne R."/>
            <person name="Stewart A."/>
            <person name="Sgouros J.G."/>
            <person name="Peat N."/>
            <person name="Hayles J."/>
            <person name="Baker S.G."/>
            <person name="Basham D."/>
            <person name="Bowman S."/>
            <person name="Brooks K."/>
            <person name="Brown D."/>
            <person name="Brown S."/>
            <person name="Chillingworth T."/>
            <person name="Churcher C.M."/>
            <person name="Collins M."/>
            <person name="Connor R."/>
            <person name="Cronin A."/>
            <person name="Davis P."/>
            <person name="Feltwell T."/>
            <person name="Fraser A."/>
            <person name="Gentles S."/>
            <person name="Goble A."/>
            <person name="Hamlin N."/>
            <person name="Harris D.E."/>
            <person name="Hidalgo J."/>
            <person name="Hodgson G."/>
            <person name="Holroyd S."/>
            <person name="Hornsby T."/>
            <person name="Howarth S."/>
            <person name="Huckle E.J."/>
            <person name="Hunt S."/>
            <person name="Jagels K."/>
            <person name="James K.D."/>
            <person name="Jones L."/>
            <person name="Jones M."/>
            <person name="Leather S."/>
            <person name="McDonald S."/>
            <person name="McLean J."/>
            <person name="Mooney P."/>
            <person name="Moule S."/>
            <person name="Mungall K.L."/>
            <person name="Murphy L.D."/>
            <person name="Niblett D."/>
            <person name="Odell C."/>
            <person name="Oliver K."/>
            <person name="O'Neil S."/>
            <person name="Pearson D."/>
            <person name="Quail M.A."/>
            <person name="Rabbinowitsch E."/>
            <person name="Rutherford K.M."/>
            <person name="Rutter S."/>
            <person name="Saunders D."/>
            <person name="Seeger K."/>
            <person name="Sharp S."/>
            <person name="Skelton J."/>
            <person name="Simmonds M.N."/>
            <person name="Squares R."/>
            <person name="Squares S."/>
            <person name="Stevens K."/>
            <person name="Taylor K."/>
            <person name="Taylor R.G."/>
            <person name="Tivey A."/>
            <person name="Walsh S.V."/>
            <person name="Warren T."/>
            <person name="Whitehead S."/>
            <person name="Woodward J.R."/>
            <person name="Volckaert G."/>
            <person name="Aert R."/>
            <person name="Robben J."/>
            <person name="Grymonprez B."/>
            <person name="Weltjens I."/>
            <person name="Vanstreels E."/>
            <person name="Rieger M."/>
            <person name="Schaefer M."/>
            <person name="Mueller-Auer S."/>
            <person name="Gabel C."/>
            <person name="Fuchs M."/>
            <person name="Duesterhoeft A."/>
            <person name="Fritzc C."/>
            <person name="Holzer E."/>
            <person name="Moestl D."/>
            <person name="Hilbert H."/>
            <person name="Borzym K."/>
            <person name="Langer I."/>
            <person name="Beck A."/>
            <person name="Lehrach H."/>
            <person name="Reinhardt R."/>
            <person name="Pohl T.M."/>
            <person name="Eger P."/>
            <person name="Zimmermann W."/>
            <person name="Wedler H."/>
            <person name="Wambutt R."/>
            <person name="Purnelle B."/>
            <person name="Goffeau A."/>
            <person name="Cadieu E."/>
            <person name="Dreano S."/>
            <person name="Gloux S."/>
            <person name="Lelaure V."/>
            <person name="Mottier S."/>
            <person name="Galibert F."/>
            <person name="Aves S.J."/>
            <person name="Xiang Z."/>
            <person name="Hunt C."/>
            <person name="Moore K."/>
            <person name="Hurst S.M."/>
            <person name="Lucas M."/>
            <person name="Rochet M."/>
            <person name="Gaillardin C."/>
            <person name="Tallada V.A."/>
            <person name="Garzon A."/>
            <person name="Thode G."/>
            <person name="Daga R.R."/>
            <person name="Cruzado L."/>
            <person name="Jimenez J."/>
            <person name="Sanchez M."/>
            <person name="del Rey F."/>
            <person name="Benito J."/>
            <person name="Dominguez A."/>
            <person name="Revuelta J.L."/>
            <person name="Moreno S."/>
            <person name="Armstrong J."/>
            <person name="Forsburg S.L."/>
            <person name="Cerutti L."/>
            <person name="Lowe T."/>
            <person name="McCombie W.R."/>
            <person name="Paulsen I."/>
            <person name="Potashkin J."/>
            <person name="Shpakovski G.V."/>
            <person name="Ussery D."/>
            <person name="Barrell B.G."/>
            <person name="Nurse P."/>
        </authorList>
    </citation>
    <scope>NUCLEOTIDE SEQUENCE [LARGE SCALE GENOMIC DNA]</scope>
    <source>
        <strain>972 / ATCC 24843</strain>
    </source>
</reference>
<reference key="3">
    <citation type="journal article" date="2008" name="J. Proteome Res.">
        <title>Phosphoproteome analysis of fission yeast.</title>
        <authorList>
            <person name="Wilson-Grady J.T."/>
            <person name="Villen J."/>
            <person name="Gygi S.P."/>
        </authorList>
    </citation>
    <scope>PHOSPHORYLATION [LARGE SCALE ANALYSIS] AT SER-676; SER-680; THR-682; SER-686; THR-694 AND SER-698</scope>
    <scope>IDENTIFICATION BY MASS SPECTROMETRY</scope>
</reference>
<proteinExistence type="evidence at protein level"/>
<evidence type="ECO:0000255" key="1"/>
<evidence type="ECO:0000255" key="2">
    <source>
        <dbReference type="PROSITE-ProRule" id="PRU00066"/>
    </source>
</evidence>
<evidence type="ECO:0000255" key="3">
    <source>
        <dbReference type="PROSITE-ProRule" id="PRU00172"/>
    </source>
</evidence>
<evidence type="ECO:0000255" key="4">
    <source>
        <dbReference type="PROSITE-ProRule" id="PRU01077"/>
    </source>
</evidence>
<evidence type="ECO:0000256" key="5">
    <source>
        <dbReference type="SAM" id="MobiDB-lite"/>
    </source>
</evidence>
<evidence type="ECO:0000269" key="6">
    <source>
    </source>
</evidence>
<evidence type="ECO:0000269" key="7">
    <source>
    </source>
</evidence>
<accession>Q09697</accession>
<gene>
    <name type="primary">rga8</name>
    <name type="ORF">SPAC13A11.01c</name>
    <name type="ORF">SPAC2F7.18c</name>
</gene>
<keyword id="KW-0175">Coiled coil</keyword>
<keyword id="KW-0963">Cytoplasm</keyword>
<keyword id="KW-0343">GTPase activation</keyword>
<keyword id="KW-0597">Phosphoprotein</keyword>
<keyword id="KW-1185">Reference proteome</keyword>
<sequence length="777" mass="88208">MISSFSNGFWSKDYATGVKKLFDCLDNGVEENEQVKNLLKLYKEANEEFGEKLQEITKECLKGKKPENTEDGATSNKAFEGLRSEIANQGKQHIRIAKDLETLIIAPFSKMSIDHSQKLQTSQQVLTNQIKSYEKKYYTLKKTKSAYYNKCRNLEDYEEESKESNETTSEAITDLTTVSSPQQQSLLENDDDLIQLGFMEFRPEELKEVLAQVLQEIPLQDYRVPILGTYPNTCSGNIIVSWLQENLPVPTLVAAEAFGQDLIAQGFLRHMGVGGSFVNSTNFHYQWKDKAFQFAGLNSVDSLVENAKALPLVGEYLSDYISHRKLYSSETQSQRLKREVLDANKIYSESVVDLDKCRTLVEETIADHLQFLQKCETDRVLYYKDFFMDLSTIISNFLPSMKLLADQIVVYQEIIQPESDIRYILESAATGPFLPRVEIYEDYYNDIKDQIFGVDVEFLSHRDKKRVPIIVSTILSYLDLLYPTLASDEVRQNIWLVNSPLSSVHQLREALNHSSSVTKEVLSQYTPSVVIGVLKLYFLELPDSIVPSSAFELIRSIYMNHSNDTPYRLRLLQNLLSQLRRVNLATLSAIITHLNRLITLTPNKETFTINLANSLSLCISRPATWNLGIQHDKHPTKFMEDLLTYGPSIFEELRKLNSSKRVSDRVLYQSSATPRSTDVSPTRPDSISSVRSHTAVESPRSSFEELQPSEIPAESEFTLENVPTSLIRSSYALNTRKTRRNFSHSSASNESAAIFIDQDAKIVNEAVASRDSSLSGS</sequence>
<dbReference type="EMBL" id="AY375444">
    <property type="protein sequence ID" value="AAR21285.1"/>
    <property type="molecule type" value="mRNA"/>
</dbReference>
<dbReference type="EMBL" id="CU329670">
    <property type="protein sequence ID" value="CAA90505.2"/>
    <property type="molecule type" value="Genomic_DNA"/>
</dbReference>
<dbReference type="PIR" id="T38566">
    <property type="entry name" value="S58162"/>
</dbReference>
<dbReference type="RefSeq" id="NP_592988.2">
    <property type="nucleotide sequence ID" value="NM_001018388.2"/>
</dbReference>
<dbReference type="SMR" id="Q09697"/>
<dbReference type="BioGRID" id="279071">
    <property type="interactions" value="61"/>
</dbReference>
<dbReference type="FunCoup" id="Q09697">
    <property type="interactions" value="26"/>
</dbReference>
<dbReference type="STRING" id="284812.Q09697"/>
<dbReference type="iPTMnet" id="Q09697"/>
<dbReference type="PaxDb" id="4896-SPAC13A11.01c.1"/>
<dbReference type="EnsemblFungi" id="SPAC13A11.01c.1">
    <property type="protein sequence ID" value="SPAC13A11.01c.1:pep"/>
    <property type="gene ID" value="SPAC13A11.01c"/>
</dbReference>
<dbReference type="GeneID" id="2542617"/>
<dbReference type="KEGG" id="spo:2542617"/>
<dbReference type="PomBase" id="SPAC13A11.01c">
    <property type="gene designation" value="rga8"/>
</dbReference>
<dbReference type="VEuPathDB" id="FungiDB:SPAC13A11.01c"/>
<dbReference type="eggNOG" id="ENOG502QQWB">
    <property type="taxonomic scope" value="Eukaryota"/>
</dbReference>
<dbReference type="HOGENOM" id="CLU_008201_1_0_1"/>
<dbReference type="InParanoid" id="Q09697"/>
<dbReference type="OMA" id="WSQKQPE"/>
<dbReference type="PhylomeDB" id="Q09697"/>
<dbReference type="Reactome" id="R-SPO-8856828">
    <property type="pathway name" value="Clathrin-mediated endocytosis"/>
</dbReference>
<dbReference type="PRO" id="PR:Q09697"/>
<dbReference type="Proteomes" id="UP000002485">
    <property type="component" value="Chromosome I"/>
</dbReference>
<dbReference type="GO" id="GO:0051285">
    <property type="term" value="C:cell cortex of cell tip"/>
    <property type="evidence" value="ECO:0000314"/>
    <property type="project" value="PomBase"/>
</dbReference>
<dbReference type="GO" id="GO:0032153">
    <property type="term" value="C:cell division site"/>
    <property type="evidence" value="ECO:0000314"/>
    <property type="project" value="PomBase"/>
</dbReference>
<dbReference type="GO" id="GO:0005737">
    <property type="term" value="C:cytoplasm"/>
    <property type="evidence" value="ECO:0007005"/>
    <property type="project" value="PomBase"/>
</dbReference>
<dbReference type="GO" id="GO:0000935">
    <property type="term" value="C:division septum"/>
    <property type="evidence" value="ECO:0000314"/>
    <property type="project" value="PomBase"/>
</dbReference>
<dbReference type="GO" id="GO:0035838">
    <property type="term" value="C:growing cell tip"/>
    <property type="evidence" value="ECO:0000314"/>
    <property type="project" value="PomBase"/>
</dbReference>
<dbReference type="GO" id="GO:0031097">
    <property type="term" value="C:medial cortex"/>
    <property type="evidence" value="ECO:0000314"/>
    <property type="project" value="PomBase"/>
</dbReference>
<dbReference type="GO" id="GO:0005096">
    <property type="term" value="F:GTPase activator activity"/>
    <property type="evidence" value="ECO:0000315"/>
    <property type="project" value="PomBase"/>
</dbReference>
<dbReference type="GO" id="GO:0007010">
    <property type="term" value="P:cytoskeleton organization"/>
    <property type="evidence" value="ECO:0000318"/>
    <property type="project" value="GO_Central"/>
</dbReference>
<dbReference type="GO" id="GO:0030950">
    <property type="term" value="P:establishment or maintenance of actin cytoskeleton polarity"/>
    <property type="evidence" value="ECO:0000316"/>
    <property type="project" value="PomBase"/>
</dbReference>
<dbReference type="GO" id="GO:0007264">
    <property type="term" value="P:small GTPase-mediated signal transduction"/>
    <property type="evidence" value="ECO:0000318"/>
    <property type="project" value="GO_Central"/>
</dbReference>
<dbReference type="CDD" id="cd04436">
    <property type="entry name" value="DEP_fRgd2"/>
    <property type="match status" value="1"/>
</dbReference>
<dbReference type="CDD" id="cd04399">
    <property type="entry name" value="RhoGAP_fRGD2"/>
    <property type="match status" value="1"/>
</dbReference>
<dbReference type="Gene3D" id="1.20.1270.60">
    <property type="entry name" value="Arfaptin homology (AH) domain/BAR domain"/>
    <property type="match status" value="2"/>
</dbReference>
<dbReference type="Gene3D" id="1.10.555.10">
    <property type="entry name" value="Rho GTPase activation protein"/>
    <property type="match status" value="1"/>
</dbReference>
<dbReference type="Gene3D" id="1.10.10.10">
    <property type="entry name" value="Winged helix-like DNA-binding domain superfamily/Winged helix DNA-binding domain"/>
    <property type="match status" value="1"/>
</dbReference>
<dbReference type="InterPro" id="IPR027267">
    <property type="entry name" value="AH/BAR_dom_sf"/>
</dbReference>
<dbReference type="InterPro" id="IPR000591">
    <property type="entry name" value="DEP_dom"/>
</dbReference>
<dbReference type="InterPro" id="IPR031160">
    <property type="entry name" value="F_BAR"/>
</dbReference>
<dbReference type="InterPro" id="IPR001060">
    <property type="entry name" value="FCH_dom"/>
</dbReference>
<dbReference type="InterPro" id="IPR008936">
    <property type="entry name" value="Rho_GTPase_activation_prot"/>
</dbReference>
<dbReference type="InterPro" id="IPR000198">
    <property type="entry name" value="RhoGAP_dom"/>
</dbReference>
<dbReference type="InterPro" id="IPR036388">
    <property type="entry name" value="WH-like_DNA-bd_sf"/>
</dbReference>
<dbReference type="InterPro" id="IPR036390">
    <property type="entry name" value="WH_DNA-bd_sf"/>
</dbReference>
<dbReference type="PANTHER" id="PTHR23065">
    <property type="entry name" value="PROLINE-SERINE-THREONINE PHOSPHATASE INTERACTING PROTEIN 1"/>
    <property type="match status" value="1"/>
</dbReference>
<dbReference type="PANTHER" id="PTHR23065:SF17">
    <property type="entry name" value="RHO-GTPASE-ACTIVATING PROTEIN RGD2"/>
    <property type="match status" value="1"/>
</dbReference>
<dbReference type="Pfam" id="PF00610">
    <property type="entry name" value="DEP"/>
    <property type="match status" value="1"/>
</dbReference>
<dbReference type="Pfam" id="PF00611">
    <property type="entry name" value="FCH"/>
    <property type="match status" value="1"/>
</dbReference>
<dbReference type="Pfam" id="PF00620">
    <property type="entry name" value="RhoGAP"/>
    <property type="match status" value="1"/>
</dbReference>
<dbReference type="SMART" id="SM00049">
    <property type="entry name" value="DEP"/>
    <property type="match status" value="1"/>
</dbReference>
<dbReference type="SMART" id="SM00055">
    <property type="entry name" value="FCH"/>
    <property type="match status" value="1"/>
</dbReference>
<dbReference type="SMART" id="SM00324">
    <property type="entry name" value="RhoGAP"/>
    <property type="match status" value="1"/>
</dbReference>
<dbReference type="SUPFAM" id="SSF103657">
    <property type="entry name" value="BAR/IMD domain-like"/>
    <property type="match status" value="1"/>
</dbReference>
<dbReference type="SUPFAM" id="SSF48350">
    <property type="entry name" value="GTPase activation domain, GAP"/>
    <property type="match status" value="1"/>
</dbReference>
<dbReference type="SUPFAM" id="SSF46785">
    <property type="entry name" value="Winged helix' DNA-binding domain"/>
    <property type="match status" value="1"/>
</dbReference>
<dbReference type="PROSITE" id="PS50186">
    <property type="entry name" value="DEP"/>
    <property type="match status" value="1"/>
</dbReference>
<dbReference type="PROSITE" id="PS51741">
    <property type="entry name" value="F_BAR"/>
    <property type="match status" value="1"/>
</dbReference>
<dbReference type="PROSITE" id="PS50238">
    <property type="entry name" value="RHOGAP"/>
    <property type="match status" value="1"/>
</dbReference>
<organism>
    <name type="scientific">Schizosaccharomyces pombe (strain 972 / ATCC 24843)</name>
    <name type="common">Fission yeast</name>
    <dbReference type="NCBI Taxonomy" id="284812"/>
    <lineage>
        <taxon>Eukaryota</taxon>
        <taxon>Fungi</taxon>
        <taxon>Dikarya</taxon>
        <taxon>Ascomycota</taxon>
        <taxon>Taphrinomycotina</taxon>
        <taxon>Schizosaccharomycetes</taxon>
        <taxon>Schizosaccharomycetales</taxon>
        <taxon>Schizosaccharomycetaceae</taxon>
        <taxon>Schizosaccharomyces</taxon>
    </lineage>
</organism>
<name>RGA8_SCHPO</name>